<proteinExistence type="evidence at transcript level"/>
<name>LBD33_ARATH</name>
<organism>
    <name type="scientific">Arabidopsis thaliana</name>
    <name type="common">Mouse-ear cress</name>
    <dbReference type="NCBI Taxonomy" id="3702"/>
    <lineage>
        <taxon>Eukaryota</taxon>
        <taxon>Viridiplantae</taxon>
        <taxon>Streptophyta</taxon>
        <taxon>Embryophyta</taxon>
        <taxon>Tracheophyta</taxon>
        <taxon>Spermatophyta</taxon>
        <taxon>Magnoliopsida</taxon>
        <taxon>eudicotyledons</taxon>
        <taxon>Gunneridae</taxon>
        <taxon>Pentapetalae</taxon>
        <taxon>rosids</taxon>
        <taxon>malvids</taxon>
        <taxon>Brassicales</taxon>
        <taxon>Brassicaceae</taxon>
        <taxon>Camelineae</taxon>
        <taxon>Arabidopsis</taxon>
    </lineage>
</organism>
<protein>
    <recommendedName>
        <fullName>LOB domain-containing protein 33</fullName>
    </recommendedName>
    <alternativeName>
        <fullName>ASYMMETRIC LEAVES 2-like protein 24</fullName>
        <shortName>AS2-like protein 24</shortName>
    </alternativeName>
</protein>
<comment type="tissue specificity">
    <text evidence="2">Expressed in roots.</text>
</comment>
<comment type="induction">
    <text evidence="3">By auxin.</text>
</comment>
<comment type="similarity">
    <text evidence="4">Belongs to the LOB domain-containing protein family.</text>
</comment>
<feature type="chain" id="PRO_0000132284" description="LOB domain-containing protein 33">
    <location>
        <begin position="1"/>
        <end position="177"/>
    </location>
</feature>
<feature type="domain" description="LOB" evidence="1">
    <location>
        <begin position="6"/>
        <end position="108"/>
    </location>
</feature>
<keyword id="KW-1185">Reference proteome</keyword>
<evidence type="ECO:0000255" key="1">
    <source>
        <dbReference type="PROSITE-ProRule" id="PRU00291"/>
    </source>
</evidence>
<evidence type="ECO:0000269" key="2">
    <source>
    </source>
</evidence>
<evidence type="ECO:0000269" key="3">
    <source>
    </source>
</evidence>
<evidence type="ECO:0000305" key="4"/>
<accession>Q9LHS8</accession>
<accession>B7XG78</accession>
<gene>
    <name type="primary">LBD33</name>
    <name type="synonym">ASL24</name>
    <name type="ordered locus">At5g06080</name>
    <name type="ORF">K16F4.4</name>
</gene>
<sequence>MASHGSSCGACKFLRRKCNRDCVFSPYFSYEQASSHFAAVHKVFGASNVSKHLLHLPQHQRNIAAITISYEALSRMRDPVYGCVAHIFALHQQVVTLQEEIEFLGSQMKNFSYSNQNGSQLNNIPEFVNQMTMATTNFVDESVLNNADGRNCYDGFFTNSEEMLVNHQWLQNMDYYY</sequence>
<reference key="1">
    <citation type="journal article" date="2009" name="Plant J.">
        <title>Characterization of genes in the ASYMMETRIC LEAVES2/LATERAL ORGAN BOUNDARIES (AS2/LOB) family in Arabidopsis thaliana, and functional and molecular comparisons between AS2 and other family members.</title>
        <authorList>
            <person name="Matsumura Y."/>
            <person name="Iwakawa H."/>
            <person name="Machida Y."/>
            <person name="Machida C."/>
        </authorList>
    </citation>
    <scope>NUCLEOTIDE SEQUENCE [MRNA]</scope>
    <source>
        <strain>cv. Columbia</strain>
    </source>
</reference>
<reference key="2">
    <citation type="submission" date="2000-05" db="EMBL/GenBank/DDBJ databases">
        <title>Structural analysis of Arabidopsis thaliana chromosome 5. XI.</title>
        <authorList>
            <person name="Kaneko T."/>
            <person name="Katoh T."/>
            <person name="Asamizu E."/>
            <person name="Sato S."/>
            <person name="Nakamura Y."/>
            <person name="Kotani H."/>
            <person name="Tabata S."/>
        </authorList>
    </citation>
    <scope>NUCLEOTIDE SEQUENCE [LARGE SCALE GENOMIC DNA]</scope>
    <source>
        <strain>cv. Columbia</strain>
    </source>
</reference>
<reference key="3">
    <citation type="journal article" date="2017" name="Plant J.">
        <title>Araport11: a complete reannotation of the Arabidopsis thaliana reference genome.</title>
        <authorList>
            <person name="Cheng C.Y."/>
            <person name="Krishnakumar V."/>
            <person name="Chan A.P."/>
            <person name="Thibaud-Nissen F."/>
            <person name="Schobel S."/>
            <person name="Town C.D."/>
        </authorList>
    </citation>
    <scope>GENOME REANNOTATION</scope>
    <source>
        <strain>cv. Columbia</strain>
    </source>
</reference>
<reference key="4">
    <citation type="journal article" date="2002" name="Plant Physiol.">
        <title>The LATERAL ORGAN BOUNDARIES gene defines a novel, plant-specific gene family.</title>
        <authorList>
            <person name="Shuai B."/>
            <person name="Reynaga-Pena C.G."/>
            <person name="Springer P.S."/>
        </authorList>
    </citation>
    <scope>TISSUE SPECIFICITY</scope>
    <scope>GENE FAMILY</scope>
    <scope>NOMENCLATURE</scope>
</reference>
<reference key="5">
    <citation type="journal article" date="2002" name="Plant Cell Physiol.">
        <title>The ASYMMETRIC LEAVES2 gene of Arabidopsis thaliana, required for formation of a symmetric flat leaf lamina, encodes a member of a novel family of proteins characterized by cysteine repeats and a leucine zipper.</title>
        <authorList>
            <person name="Iwakawa H."/>
            <person name="Ueno Y."/>
            <person name="Semiarti E."/>
            <person name="Onouchi H."/>
            <person name="Kojima S."/>
            <person name="Tsukaya H."/>
            <person name="Hasebe M."/>
            <person name="Soma T."/>
            <person name="Ikezaki M."/>
            <person name="Machida C."/>
            <person name="Machida Y."/>
        </authorList>
    </citation>
    <scope>GENE FAMILY</scope>
    <scope>NOMENCLATURE</scope>
</reference>
<reference key="6">
    <citation type="journal article" date="2007" name="Plant Cell">
        <title>ARF7 and ARF19 regulate lateral root formation via direct activation of LBD/ASL genes in Arabidopsis.</title>
        <authorList>
            <person name="Okushima Y."/>
            <person name="Fukaki H."/>
            <person name="Onoda M."/>
            <person name="Theologis A."/>
            <person name="Tasaka M."/>
        </authorList>
    </citation>
    <scope>INDUCTION BY AUXIN</scope>
</reference>
<dbReference type="EMBL" id="AB473857">
    <property type="protein sequence ID" value="BAH10568.1"/>
    <property type="molecule type" value="mRNA"/>
</dbReference>
<dbReference type="EMBL" id="AP002030">
    <property type="protein sequence ID" value="BAA98197.1"/>
    <property type="molecule type" value="Genomic_DNA"/>
</dbReference>
<dbReference type="EMBL" id="CP002688">
    <property type="protein sequence ID" value="AED90962.1"/>
    <property type="molecule type" value="Genomic_DNA"/>
</dbReference>
<dbReference type="RefSeq" id="NP_196226.1">
    <property type="nucleotide sequence ID" value="NM_120690.5"/>
</dbReference>
<dbReference type="SMR" id="Q9LHS8"/>
<dbReference type="IntAct" id="Q9LHS8">
    <property type="interactions" value="1"/>
</dbReference>
<dbReference type="STRING" id="3702.Q9LHS8"/>
<dbReference type="PaxDb" id="3702-AT5G06080.1"/>
<dbReference type="ProteomicsDB" id="237077"/>
<dbReference type="EnsemblPlants" id="AT5G06080.1">
    <property type="protein sequence ID" value="AT5G06080.1"/>
    <property type="gene ID" value="AT5G06080"/>
</dbReference>
<dbReference type="GeneID" id="830495"/>
<dbReference type="Gramene" id="AT5G06080.1">
    <property type="protein sequence ID" value="AT5G06080.1"/>
    <property type="gene ID" value="AT5G06080"/>
</dbReference>
<dbReference type="KEGG" id="ath:AT5G06080"/>
<dbReference type="Araport" id="AT5G06080"/>
<dbReference type="TAIR" id="AT5G06080">
    <property type="gene designation" value="LBD33"/>
</dbReference>
<dbReference type="eggNOG" id="ENOG502RYXG">
    <property type="taxonomic scope" value="Eukaryota"/>
</dbReference>
<dbReference type="HOGENOM" id="CLU_058353_3_2_1"/>
<dbReference type="InParanoid" id="Q9LHS8"/>
<dbReference type="OMA" id="QNMDYYY"/>
<dbReference type="OrthoDB" id="1840682at2759"/>
<dbReference type="PhylomeDB" id="Q9LHS8"/>
<dbReference type="PRO" id="PR:Q9LHS8"/>
<dbReference type="Proteomes" id="UP000006548">
    <property type="component" value="Chromosome 5"/>
</dbReference>
<dbReference type="ExpressionAtlas" id="Q9LHS8">
    <property type="expression patterns" value="baseline and differential"/>
</dbReference>
<dbReference type="InterPro" id="IPR004883">
    <property type="entry name" value="LOB"/>
</dbReference>
<dbReference type="PANTHER" id="PTHR31529">
    <property type="entry name" value="LOB DOMAIN CONTAINING PROTEIN"/>
    <property type="match status" value="1"/>
</dbReference>
<dbReference type="PANTHER" id="PTHR31529:SF63">
    <property type="entry name" value="LOB DOMAIN-CONTAINING PROTEIN 33"/>
    <property type="match status" value="1"/>
</dbReference>
<dbReference type="Pfam" id="PF03195">
    <property type="entry name" value="LOB"/>
    <property type="match status" value="1"/>
</dbReference>
<dbReference type="PROSITE" id="PS50891">
    <property type="entry name" value="LOB"/>
    <property type="match status" value="1"/>
</dbReference>